<dbReference type="EC" id="2.1.1.61" evidence="1"/>
<dbReference type="EC" id="1.5.-.-" evidence="1"/>
<dbReference type="EMBL" id="CP000438">
    <property type="protein sequence ID" value="ABJ12712.1"/>
    <property type="molecule type" value="Genomic_DNA"/>
</dbReference>
<dbReference type="RefSeq" id="WP_003138195.1">
    <property type="nucleotide sequence ID" value="NZ_CP034244.1"/>
</dbReference>
<dbReference type="SMR" id="Q02QU5"/>
<dbReference type="KEGG" id="pau:PA14_19400"/>
<dbReference type="PseudoCAP" id="PA14_19400"/>
<dbReference type="HOGENOM" id="CLU_022427_1_0_6"/>
<dbReference type="BioCyc" id="PAER208963:G1G74-1597-MONOMER"/>
<dbReference type="Proteomes" id="UP000000653">
    <property type="component" value="Chromosome"/>
</dbReference>
<dbReference type="GO" id="GO:0005737">
    <property type="term" value="C:cytoplasm"/>
    <property type="evidence" value="ECO:0007669"/>
    <property type="project" value="UniProtKB-SubCell"/>
</dbReference>
<dbReference type="GO" id="GO:0050660">
    <property type="term" value="F:flavin adenine dinucleotide binding"/>
    <property type="evidence" value="ECO:0007669"/>
    <property type="project" value="UniProtKB-UniRule"/>
</dbReference>
<dbReference type="GO" id="GO:0016645">
    <property type="term" value="F:oxidoreductase activity, acting on the CH-NH group of donors"/>
    <property type="evidence" value="ECO:0007669"/>
    <property type="project" value="InterPro"/>
</dbReference>
<dbReference type="GO" id="GO:0004808">
    <property type="term" value="F:tRNA (5-methylaminomethyl-2-thiouridylate)(34)-methyltransferase activity"/>
    <property type="evidence" value="ECO:0007669"/>
    <property type="project" value="UniProtKB-EC"/>
</dbReference>
<dbReference type="GO" id="GO:0032259">
    <property type="term" value="P:methylation"/>
    <property type="evidence" value="ECO:0007669"/>
    <property type="project" value="UniProtKB-KW"/>
</dbReference>
<dbReference type="GO" id="GO:0002098">
    <property type="term" value="P:tRNA wobble uridine modification"/>
    <property type="evidence" value="ECO:0007669"/>
    <property type="project" value="TreeGrafter"/>
</dbReference>
<dbReference type="Gene3D" id="3.30.9.10">
    <property type="entry name" value="D-Amino Acid Oxidase, subunit A, domain 2"/>
    <property type="match status" value="1"/>
</dbReference>
<dbReference type="Gene3D" id="3.50.50.60">
    <property type="entry name" value="FAD/NAD(P)-binding domain"/>
    <property type="match status" value="1"/>
</dbReference>
<dbReference type="Gene3D" id="3.40.50.150">
    <property type="entry name" value="Vaccinia Virus protein VP39"/>
    <property type="match status" value="1"/>
</dbReference>
<dbReference type="HAMAP" id="MF_01102">
    <property type="entry name" value="MnmC"/>
    <property type="match status" value="1"/>
</dbReference>
<dbReference type="InterPro" id="IPR006076">
    <property type="entry name" value="FAD-dep_OxRdtase"/>
</dbReference>
<dbReference type="InterPro" id="IPR036188">
    <property type="entry name" value="FAD/NAD-bd_sf"/>
</dbReference>
<dbReference type="InterPro" id="IPR008471">
    <property type="entry name" value="MnmC-like_methylTransf"/>
</dbReference>
<dbReference type="InterPro" id="IPR029063">
    <property type="entry name" value="SAM-dependent_MTases_sf"/>
</dbReference>
<dbReference type="InterPro" id="IPR023032">
    <property type="entry name" value="tRNA_MAMT_biosynth_bifunc_MnmC"/>
</dbReference>
<dbReference type="InterPro" id="IPR047785">
    <property type="entry name" value="tRNA_MNMC2"/>
</dbReference>
<dbReference type="InterPro" id="IPR017610">
    <property type="entry name" value="tRNA_S-uridine_synth_MnmC_C"/>
</dbReference>
<dbReference type="NCBIfam" id="TIGR03197">
    <property type="entry name" value="MnmC_Cterm"/>
    <property type="match status" value="1"/>
</dbReference>
<dbReference type="NCBIfam" id="NF002481">
    <property type="entry name" value="PRK01747.1-2"/>
    <property type="match status" value="1"/>
</dbReference>
<dbReference type="NCBIfam" id="NF033855">
    <property type="entry name" value="tRNA_MNMC2"/>
    <property type="match status" value="1"/>
</dbReference>
<dbReference type="PANTHER" id="PTHR13847">
    <property type="entry name" value="SARCOSINE DEHYDROGENASE-RELATED"/>
    <property type="match status" value="1"/>
</dbReference>
<dbReference type="PANTHER" id="PTHR13847:SF283">
    <property type="entry name" value="TRNA 5-METHYLAMINOMETHYL-2-THIOURIDINE BIOSYNTHESIS BIFUNCTIONAL PROTEIN MNMC"/>
    <property type="match status" value="1"/>
</dbReference>
<dbReference type="Pfam" id="PF01266">
    <property type="entry name" value="DAO"/>
    <property type="match status" value="1"/>
</dbReference>
<dbReference type="Pfam" id="PF05430">
    <property type="entry name" value="Methyltransf_30"/>
    <property type="match status" value="1"/>
</dbReference>
<dbReference type="SUPFAM" id="SSF54373">
    <property type="entry name" value="FAD-linked reductases, C-terminal domain"/>
    <property type="match status" value="1"/>
</dbReference>
<dbReference type="SUPFAM" id="SSF51905">
    <property type="entry name" value="FAD/NAD(P)-binding domain"/>
    <property type="match status" value="1"/>
</dbReference>
<dbReference type="SUPFAM" id="SSF53335">
    <property type="entry name" value="S-adenosyl-L-methionine-dependent methyltransferases"/>
    <property type="match status" value="1"/>
</dbReference>
<protein>
    <recommendedName>
        <fullName evidence="1">tRNA 5-methylaminomethyl-2-thiouridine biosynthesis bifunctional protein MnmC</fullName>
        <shortName evidence="1">tRNA mnm(5)s(2)U biosynthesis bifunctional protein</shortName>
    </recommendedName>
    <domain>
        <recommendedName>
            <fullName evidence="1">tRNA (mnm(5)s(2)U34)-methyltransferase</fullName>
            <ecNumber evidence="1">2.1.1.61</ecNumber>
        </recommendedName>
    </domain>
    <domain>
        <recommendedName>
            <fullName evidence="1">FAD-dependent cmnm(5)s(2)U34 oxidoreductase</fullName>
            <ecNumber evidence="1">1.5.-.-</ecNumber>
        </recommendedName>
    </domain>
</protein>
<accession>Q02QU5</accession>
<reference key="1">
    <citation type="journal article" date="2006" name="Genome Biol.">
        <title>Genomic analysis reveals that Pseudomonas aeruginosa virulence is combinatorial.</title>
        <authorList>
            <person name="Lee D.G."/>
            <person name="Urbach J.M."/>
            <person name="Wu G."/>
            <person name="Liberati N.T."/>
            <person name="Feinbaum R.L."/>
            <person name="Miyata S."/>
            <person name="Diggins L.T."/>
            <person name="He J."/>
            <person name="Saucier M."/>
            <person name="Deziel E."/>
            <person name="Friedman L."/>
            <person name="Li L."/>
            <person name="Grills G."/>
            <person name="Montgomery K."/>
            <person name="Kucherlapati R."/>
            <person name="Rahme L.G."/>
            <person name="Ausubel F.M."/>
        </authorList>
    </citation>
    <scope>NUCLEOTIDE SEQUENCE [LARGE SCALE GENOMIC DNA]</scope>
    <source>
        <strain>UCBPP-PA14</strain>
    </source>
</reference>
<keyword id="KW-0963">Cytoplasm</keyword>
<keyword id="KW-0274">FAD</keyword>
<keyword id="KW-0285">Flavoprotein</keyword>
<keyword id="KW-0489">Methyltransferase</keyword>
<keyword id="KW-0511">Multifunctional enzyme</keyword>
<keyword id="KW-0560">Oxidoreductase</keyword>
<keyword id="KW-0949">S-adenosyl-L-methionine</keyword>
<keyword id="KW-0808">Transferase</keyword>
<keyword id="KW-0819">tRNA processing</keyword>
<sequence>MSDFQHAQLDWDENGQPLSRAFGDVYFSRHSGLNETRHVFLATNRLAERFAALGDGEVLCIGETGFGTGLNFLCAWQLFEQVAPAGARLEFVSVEKFPLAAADLRRALALWPELAPWSEALLGQYLAVHPGFQRLAFAGGRIGLTLLLGDALECLPQLDARVDAWFLDGFAPAKNPDMWSPALFAELARLSAPQATLGTFTSAGFVRRGLIEAGFAMQRVPGYGQKREMLGGTYQGPPANAGKPWYARPAPHAGRRAALVVGGGLAGCASAASLAARGWQVTLIERHPGLAREASGNPQGVLYLKLSAHGTPLSRLVLSGFGHTRRLLERLRRGHDWDACGVLQLAFDAKEAQRQAQLAAAFPADLLHGLDREQAERLAGVALPAGGLFYPEAGWVHPPALCQALAATPGITLLSGRAVRLRREGDDWCAYAGDECLARAPLAILATAADIRDFPPAAELPLKRIRGQVTRLPATPQSRALRTVVCAEGYVAPPRGDEHTLGASFDFKSEDLAPTLAEHQGNLELLREISPDLLQRLGADDLPLERLEGRAAFRCTSPDYLPLVGPLAERAAFDEAYAVLARDARQVPERACPWLPGLYLNSGHGSRGLISAPLSGELLAAWICGEPLPLPRAVAEACHPNRFLLRDLVRGQRG</sequence>
<evidence type="ECO:0000255" key="1">
    <source>
        <dbReference type="HAMAP-Rule" id="MF_01102"/>
    </source>
</evidence>
<proteinExistence type="inferred from homology"/>
<gene>
    <name evidence="1" type="primary">mnmC</name>
    <name type="ordered locus">PA14_19400</name>
</gene>
<comment type="function">
    <text evidence="1">Catalyzes the last two steps in the biosynthesis of 5-methylaminomethyl-2-thiouridine (mnm(5)s(2)U) at the wobble position (U34) in tRNA. Catalyzes the FAD-dependent demodification of cmnm(5)s(2)U34 to nm(5)s(2)U34, followed by the transfer of a methyl group from S-adenosyl-L-methionine to nm(5)s(2)U34, to form mnm(5)s(2)U34.</text>
</comment>
<comment type="catalytic activity">
    <reaction evidence="1">
        <text>5-aminomethyl-2-thiouridine(34) in tRNA + S-adenosyl-L-methionine = 5-methylaminomethyl-2-thiouridine(34) in tRNA + S-adenosyl-L-homocysteine + H(+)</text>
        <dbReference type="Rhea" id="RHEA:19569"/>
        <dbReference type="Rhea" id="RHEA-COMP:10195"/>
        <dbReference type="Rhea" id="RHEA-COMP:10197"/>
        <dbReference type="ChEBI" id="CHEBI:15378"/>
        <dbReference type="ChEBI" id="CHEBI:57856"/>
        <dbReference type="ChEBI" id="CHEBI:59789"/>
        <dbReference type="ChEBI" id="CHEBI:74454"/>
        <dbReference type="ChEBI" id="CHEBI:74455"/>
        <dbReference type="EC" id="2.1.1.61"/>
    </reaction>
</comment>
<comment type="cofactor">
    <cofactor evidence="1">
        <name>FAD</name>
        <dbReference type="ChEBI" id="CHEBI:57692"/>
    </cofactor>
</comment>
<comment type="subcellular location">
    <subcellularLocation>
        <location evidence="1">Cytoplasm</location>
    </subcellularLocation>
</comment>
<comment type="similarity">
    <text evidence="1">In the N-terminal section; belongs to the methyltransferase superfamily. tRNA (mnm(5)s(2)U34)-methyltransferase family.</text>
</comment>
<comment type="similarity">
    <text evidence="1">In the C-terminal section; belongs to the DAO family.</text>
</comment>
<name>MNMC_PSEAB</name>
<organism>
    <name type="scientific">Pseudomonas aeruginosa (strain UCBPP-PA14)</name>
    <dbReference type="NCBI Taxonomy" id="208963"/>
    <lineage>
        <taxon>Bacteria</taxon>
        <taxon>Pseudomonadati</taxon>
        <taxon>Pseudomonadota</taxon>
        <taxon>Gammaproteobacteria</taxon>
        <taxon>Pseudomonadales</taxon>
        <taxon>Pseudomonadaceae</taxon>
        <taxon>Pseudomonas</taxon>
    </lineage>
</organism>
<feature type="chain" id="PRO_1000065003" description="tRNA 5-methylaminomethyl-2-thiouridine biosynthesis bifunctional protein MnmC">
    <location>
        <begin position="1"/>
        <end position="654"/>
    </location>
</feature>
<feature type="region of interest" description="tRNA (mnm(5)s(2)U34)-methyltransferase">
    <location>
        <begin position="1"/>
        <end position="235"/>
    </location>
</feature>
<feature type="region of interest" description="FAD-dependent cmnm(5)s(2)U34 oxidoreductase">
    <location>
        <begin position="261"/>
        <end position="654"/>
    </location>
</feature>